<sequence length="754" mass="88297">MIETIQADWIKSEAINLENCCNDNPLKILGPHFYEEQWVIRVWMPEADEVKINFKNNTYKAESINHKWLFEAILPENPNHNYEINILRGGVTHTQHDPWSYREEWMGEVDRHLFAEGNHHHIWEKMGAHLIEEKNQKGVMFCIWAPNAKSISIIGDINSWDGRHHPMQKRLGGIWELFMPSMQEGDTYKYEIRTQQGHIYEKADPYGFLHEIRPQNGSIVSKLKNFNWNDSSWISNRDSSSQINKPISVYEMHLGSWLHESTDNKYLENNGDPRDPVPAADLKPGTRLLTYPELTKKLIPYVKERGFTHIELMPISEHPFDGSWGYQVTGWYAPTSRFGTPNEFREFVNKCHEEGIGVILDWVPGHFPKDKHGLAFFDGCHLYEHGDSRIGEHKEWGTLIFNYSRNEVRNFLVANLVYWFEEFHIDGIRVDAVASMLYRDYLRPDGEWIPNENGGNENIEAVKFLQQANHVLFQHFPGALSIAEESTTWPMVTKPTDMGGLGFNLKWNMGWMHDMLDYFEIDPWFRQFHQNSVTFSITYNYTENFMLALSHDEVVHGKSHLLHKMPGDDWKKYANTRALLTYMWTHPGKKTIFMGMEFGQRQEWNVWDDLQWELLEFEPHKGIRNLIDDLNVLYKNEPALWKNDFDPYGFQWIDCNDKSNSVISFMRRENDTNEWLVVVANFTPNTHESYKVGVPMEGFYREIFNSDGSRYGGSNKGNLGGKETINYNIHDYQNALELALPPLSVSIFKHQSKK</sequence>
<dbReference type="EC" id="2.4.1.18" evidence="1"/>
<dbReference type="EMBL" id="CP000551">
    <property type="protein sequence ID" value="ABM69926.1"/>
    <property type="molecule type" value="Genomic_DNA"/>
</dbReference>
<dbReference type="RefSeq" id="WP_011818088.1">
    <property type="nucleotide sequence ID" value="NC_008816.1"/>
</dbReference>
<dbReference type="SMR" id="A2BQ65"/>
<dbReference type="STRING" id="146891.A9601_06401"/>
<dbReference type="CAZy" id="CBM48">
    <property type="family name" value="Carbohydrate-Binding Module Family 48"/>
</dbReference>
<dbReference type="CAZy" id="GH13">
    <property type="family name" value="Glycoside Hydrolase Family 13"/>
</dbReference>
<dbReference type="KEGG" id="pmb:A9601_06401"/>
<dbReference type="eggNOG" id="COG0296">
    <property type="taxonomic scope" value="Bacteria"/>
</dbReference>
<dbReference type="HOGENOM" id="CLU_004245_3_2_3"/>
<dbReference type="OrthoDB" id="9800174at2"/>
<dbReference type="UniPathway" id="UPA00164"/>
<dbReference type="Proteomes" id="UP000002590">
    <property type="component" value="Chromosome"/>
</dbReference>
<dbReference type="GO" id="GO:0005829">
    <property type="term" value="C:cytosol"/>
    <property type="evidence" value="ECO:0007669"/>
    <property type="project" value="TreeGrafter"/>
</dbReference>
<dbReference type="GO" id="GO:0003844">
    <property type="term" value="F:1,4-alpha-glucan branching enzyme activity"/>
    <property type="evidence" value="ECO:0007669"/>
    <property type="project" value="UniProtKB-UniRule"/>
</dbReference>
<dbReference type="GO" id="GO:0043169">
    <property type="term" value="F:cation binding"/>
    <property type="evidence" value="ECO:0007669"/>
    <property type="project" value="InterPro"/>
</dbReference>
<dbReference type="GO" id="GO:0004553">
    <property type="term" value="F:hydrolase activity, hydrolyzing O-glycosyl compounds"/>
    <property type="evidence" value="ECO:0007669"/>
    <property type="project" value="InterPro"/>
</dbReference>
<dbReference type="GO" id="GO:0005978">
    <property type="term" value="P:glycogen biosynthetic process"/>
    <property type="evidence" value="ECO:0007669"/>
    <property type="project" value="UniProtKB-UniRule"/>
</dbReference>
<dbReference type="CDD" id="cd11322">
    <property type="entry name" value="AmyAc_Glg_BE"/>
    <property type="match status" value="1"/>
</dbReference>
<dbReference type="CDD" id="cd02855">
    <property type="entry name" value="E_set_GBE_prok_N"/>
    <property type="match status" value="1"/>
</dbReference>
<dbReference type="FunFam" id="2.60.40.10:FF:000169">
    <property type="entry name" value="1,4-alpha-glucan branching enzyme GlgB"/>
    <property type="match status" value="1"/>
</dbReference>
<dbReference type="FunFam" id="2.60.40.1180:FF:000002">
    <property type="entry name" value="1,4-alpha-glucan branching enzyme GlgB"/>
    <property type="match status" value="1"/>
</dbReference>
<dbReference type="FunFam" id="3.20.20.80:FF:000003">
    <property type="entry name" value="1,4-alpha-glucan branching enzyme GlgB"/>
    <property type="match status" value="1"/>
</dbReference>
<dbReference type="Gene3D" id="3.20.20.80">
    <property type="entry name" value="Glycosidases"/>
    <property type="match status" value="1"/>
</dbReference>
<dbReference type="Gene3D" id="2.60.40.1180">
    <property type="entry name" value="Golgi alpha-mannosidase II"/>
    <property type="match status" value="1"/>
</dbReference>
<dbReference type="Gene3D" id="2.60.40.10">
    <property type="entry name" value="Immunoglobulins"/>
    <property type="match status" value="2"/>
</dbReference>
<dbReference type="HAMAP" id="MF_00685">
    <property type="entry name" value="GlgB"/>
    <property type="match status" value="1"/>
</dbReference>
<dbReference type="InterPro" id="IPR006048">
    <property type="entry name" value="A-amylase/branching_C"/>
</dbReference>
<dbReference type="InterPro" id="IPR037439">
    <property type="entry name" value="Branching_enzy"/>
</dbReference>
<dbReference type="InterPro" id="IPR006407">
    <property type="entry name" value="GlgB"/>
</dbReference>
<dbReference type="InterPro" id="IPR054169">
    <property type="entry name" value="GlgB_N"/>
</dbReference>
<dbReference type="InterPro" id="IPR044143">
    <property type="entry name" value="GlgB_N_E_set_prok"/>
</dbReference>
<dbReference type="InterPro" id="IPR006047">
    <property type="entry name" value="Glyco_hydro_13_cat_dom"/>
</dbReference>
<dbReference type="InterPro" id="IPR004193">
    <property type="entry name" value="Glyco_hydro_13_N"/>
</dbReference>
<dbReference type="InterPro" id="IPR013780">
    <property type="entry name" value="Glyco_hydro_b"/>
</dbReference>
<dbReference type="InterPro" id="IPR017853">
    <property type="entry name" value="Glycoside_hydrolase_SF"/>
</dbReference>
<dbReference type="InterPro" id="IPR013783">
    <property type="entry name" value="Ig-like_fold"/>
</dbReference>
<dbReference type="InterPro" id="IPR014756">
    <property type="entry name" value="Ig_E-set"/>
</dbReference>
<dbReference type="NCBIfam" id="TIGR01515">
    <property type="entry name" value="branching_enzym"/>
    <property type="match status" value="1"/>
</dbReference>
<dbReference type="NCBIfam" id="NF003811">
    <property type="entry name" value="PRK05402.1"/>
    <property type="match status" value="1"/>
</dbReference>
<dbReference type="NCBIfam" id="NF008967">
    <property type="entry name" value="PRK12313.1"/>
    <property type="match status" value="1"/>
</dbReference>
<dbReference type="PANTHER" id="PTHR43651">
    <property type="entry name" value="1,4-ALPHA-GLUCAN-BRANCHING ENZYME"/>
    <property type="match status" value="1"/>
</dbReference>
<dbReference type="PANTHER" id="PTHR43651:SF3">
    <property type="entry name" value="1,4-ALPHA-GLUCAN-BRANCHING ENZYME"/>
    <property type="match status" value="1"/>
</dbReference>
<dbReference type="Pfam" id="PF00128">
    <property type="entry name" value="Alpha-amylase"/>
    <property type="match status" value="2"/>
</dbReference>
<dbReference type="Pfam" id="PF02806">
    <property type="entry name" value="Alpha-amylase_C"/>
    <property type="match status" value="1"/>
</dbReference>
<dbReference type="Pfam" id="PF02922">
    <property type="entry name" value="CBM_48"/>
    <property type="match status" value="1"/>
</dbReference>
<dbReference type="Pfam" id="PF22019">
    <property type="entry name" value="GlgB_N"/>
    <property type="match status" value="1"/>
</dbReference>
<dbReference type="PIRSF" id="PIRSF000463">
    <property type="entry name" value="GlgB"/>
    <property type="match status" value="1"/>
</dbReference>
<dbReference type="SMART" id="SM00642">
    <property type="entry name" value="Aamy"/>
    <property type="match status" value="1"/>
</dbReference>
<dbReference type="SUPFAM" id="SSF51445">
    <property type="entry name" value="(Trans)glycosidases"/>
    <property type="match status" value="1"/>
</dbReference>
<dbReference type="SUPFAM" id="SSF81296">
    <property type="entry name" value="E set domains"/>
    <property type="match status" value="2"/>
</dbReference>
<dbReference type="SUPFAM" id="SSF51011">
    <property type="entry name" value="Glycosyl hydrolase domain"/>
    <property type="match status" value="1"/>
</dbReference>
<evidence type="ECO:0000255" key="1">
    <source>
        <dbReference type="HAMAP-Rule" id="MF_00685"/>
    </source>
</evidence>
<name>GLGB_PROMS</name>
<comment type="function">
    <text evidence="1">Catalyzes the formation of the alpha-1,6-glucosidic linkages in glycogen by scission of a 1,4-alpha-linked oligosaccharide from growing alpha-1,4-glucan chains and the subsequent attachment of the oligosaccharide to the alpha-1,6 position.</text>
</comment>
<comment type="catalytic activity">
    <reaction evidence="1">
        <text>Transfers a segment of a (1-&gt;4)-alpha-D-glucan chain to a primary hydroxy group in a similar glucan chain.</text>
        <dbReference type="EC" id="2.4.1.18"/>
    </reaction>
</comment>
<comment type="pathway">
    <text evidence="1">Glycan biosynthesis; glycogen biosynthesis.</text>
</comment>
<comment type="subunit">
    <text evidence="1">Monomer.</text>
</comment>
<comment type="similarity">
    <text evidence="1">Belongs to the glycosyl hydrolase 13 family. GlgB subfamily.</text>
</comment>
<reference key="1">
    <citation type="journal article" date="2007" name="PLoS Genet.">
        <title>Patterns and implications of gene gain and loss in the evolution of Prochlorococcus.</title>
        <authorList>
            <person name="Kettler G.C."/>
            <person name="Martiny A.C."/>
            <person name="Huang K."/>
            <person name="Zucker J."/>
            <person name="Coleman M.L."/>
            <person name="Rodrigue S."/>
            <person name="Chen F."/>
            <person name="Lapidus A."/>
            <person name="Ferriera S."/>
            <person name="Johnson J."/>
            <person name="Steglich C."/>
            <person name="Church G.M."/>
            <person name="Richardson P."/>
            <person name="Chisholm S.W."/>
        </authorList>
    </citation>
    <scope>NUCLEOTIDE SEQUENCE [LARGE SCALE GENOMIC DNA]</scope>
    <source>
        <strain>AS9601</strain>
    </source>
</reference>
<protein>
    <recommendedName>
        <fullName evidence="1">1,4-alpha-glucan branching enzyme GlgB</fullName>
        <ecNumber evidence="1">2.4.1.18</ecNumber>
    </recommendedName>
    <alternativeName>
        <fullName evidence="1">1,4-alpha-D-glucan:1,4-alpha-D-glucan 6-glucosyl-transferase</fullName>
    </alternativeName>
    <alternativeName>
        <fullName evidence="1">Alpha-(1-&gt;4)-glucan branching enzyme</fullName>
    </alternativeName>
    <alternativeName>
        <fullName evidence="1">Glycogen branching enzyme</fullName>
        <shortName evidence="1">BE</shortName>
    </alternativeName>
</protein>
<keyword id="KW-0119">Carbohydrate metabolism</keyword>
<keyword id="KW-0320">Glycogen biosynthesis</keyword>
<keyword id="KW-0321">Glycogen metabolism</keyword>
<keyword id="KW-0328">Glycosyltransferase</keyword>
<keyword id="KW-0808">Transferase</keyword>
<organism>
    <name type="scientific">Prochlorococcus marinus (strain AS9601)</name>
    <dbReference type="NCBI Taxonomy" id="146891"/>
    <lineage>
        <taxon>Bacteria</taxon>
        <taxon>Bacillati</taxon>
        <taxon>Cyanobacteriota</taxon>
        <taxon>Cyanophyceae</taxon>
        <taxon>Synechococcales</taxon>
        <taxon>Prochlorococcaceae</taxon>
        <taxon>Prochlorococcus</taxon>
    </lineage>
</organism>
<feature type="chain" id="PRO_1000044992" description="1,4-alpha-glucan branching enzyme GlgB">
    <location>
        <begin position="1"/>
        <end position="754"/>
    </location>
</feature>
<feature type="active site" description="Nucleophile" evidence="1">
    <location>
        <position position="431"/>
    </location>
</feature>
<feature type="active site" description="Proton donor" evidence="1">
    <location>
        <position position="484"/>
    </location>
</feature>
<proteinExistence type="inferred from homology"/>
<accession>A2BQ65</accession>
<gene>
    <name evidence="1" type="primary">glgB</name>
    <name type="ordered locus">A9601_06401</name>
</gene>